<evidence type="ECO:0000255" key="1">
    <source>
        <dbReference type="HAMAP-Rule" id="MF_01346"/>
    </source>
</evidence>
<protein>
    <recommendedName>
        <fullName evidence="1">ATP synthase subunit alpha</fullName>
        <ecNumber evidence="1">7.1.2.2</ecNumber>
    </recommendedName>
    <alternativeName>
        <fullName evidence="1">ATP synthase F1 sector subunit alpha</fullName>
    </alternativeName>
    <alternativeName>
        <fullName evidence="1">F-ATPase subunit alpha</fullName>
    </alternativeName>
</protein>
<dbReference type="EC" id="7.1.2.2" evidence="1"/>
<dbReference type="EMBL" id="CP000860">
    <property type="protein sequence ID" value="ACA60626.1"/>
    <property type="molecule type" value="Genomic_DNA"/>
</dbReference>
<dbReference type="RefSeq" id="WP_012303201.1">
    <property type="nucleotide sequence ID" value="NC_010424.1"/>
</dbReference>
<dbReference type="SMR" id="B1I6J9"/>
<dbReference type="STRING" id="477974.Daud_2139"/>
<dbReference type="KEGG" id="dau:Daud_2139"/>
<dbReference type="eggNOG" id="COG0056">
    <property type="taxonomic scope" value="Bacteria"/>
</dbReference>
<dbReference type="HOGENOM" id="CLU_010091_2_1_9"/>
<dbReference type="OrthoDB" id="9803053at2"/>
<dbReference type="Proteomes" id="UP000008544">
    <property type="component" value="Chromosome"/>
</dbReference>
<dbReference type="GO" id="GO:0005886">
    <property type="term" value="C:plasma membrane"/>
    <property type="evidence" value="ECO:0007669"/>
    <property type="project" value="UniProtKB-SubCell"/>
</dbReference>
<dbReference type="GO" id="GO:0045259">
    <property type="term" value="C:proton-transporting ATP synthase complex"/>
    <property type="evidence" value="ECO:0007669"/>
    <property type="project" value="UniProtKB-KW"/>
</dbReference>
<dbReference type="GO" id="GO:0043531">
    <property type="term" value="F:ADP binding"/>
    <property type="evidence" value="ECO:0007669"/>
    <property type="project" value="TreeGrafter"/>
</dbReference>
<dbReference type="GO" id="GO:0005524">
    <property type="term" value="F:ATP binding"/>
    <property type="evidence" value="ECO:0007669"/>
    <property type="project" value="UniProtKB-UniRule"/>
</dbReference>
<dbReference type="GO" id="GO:0046933">
    <property type="term" value="F:proton-transporting ATP synthase activity, rotational mechanism"/>
    <property type="evidence" value="ECO:0007669"/>
    <property type="project" value="UniProtKB-UniRule"/>
</dbReference>
<dbReference type="CDD" id="cd18113">
    <property type="entry name" value="ATP-synt_F1_alpha_C"/>
    <property type="match status" value="1"/>
</dbReference>
<dbReference type="CDD" id="cd18116">
    <property type="entry name" value="ATP-synt_F1_alpha_N"/>
    <property type="match status" value="1"/>
</dbReference>
<dbReference type="CDD" id="cd01132">
    <property type="entry name" value="F1-ATPase_alpha_CD"/>
    <property type="match status" value="1"/>
</dbReference>
<dbReference type="FunFam" id="1.20.150.20:FF:000001">
    <property type="entry name" value="ATP synthase subunit alpha"/>
    <property type="match status" value="1"/>
</dbReference>
<dbReference type="FunFam" id="2.40.30.20:FF:000001">
    <property type="entry name" value="ATP synthase subunit alpha"/>
    <property type="match status" value="1"/>
</dbReference>
<dbReference type="FunFam" id="3.40.50.300:FF:000002">
    <property type="entry name" value="ATP synthase subunit alpha"/>
    <property type="match status" value="1"/>
</dbReference>
<dbReference type="Gene3D" id="2.40.30.20">
    <property type="match status" value="1"/>
</dbReference>
<dbReference type="Gene3D" id="1.20.150.20">
    <property type="entry name" value="ATP synthase alpha/beta chain, C-terminal domain"/>
    <property type="match status" value="1"/>
</dbReference>
<dbReference type="Gene3D" id="3.40.50.300">
    <property type="entry name" value="P-loop containing nucleotide triphosphate hydrolases"/>
    <property type="match status" value="1"/>
</dbReference>
<dbReference type="HAMAP" id="MF_01346">
    <property type="entry name" value="ATP_synth_alpha_bact"/>
    <property type="match status" value="1"/>
</dbReference>
<dbReference type="InterPro" id="IPR023366">
    <property type="entry name" value="ATP_synth_asu-like_sf"/>
</dbReference>
<dbReference type="InterPro" id="IPR000793">
    <property type="entry name" value="ATP_synth_asu_C"/>
</dbReference>
<dbReference type="InterPro" id="IPR038376">
    <property type="entry name" value="ATP_synth_asu_C_sf"/>
</dbReference>
<dbReference type="InterPro" id="IPR033732">
    <property type="entry name" value="ATP_synth_F1_a_nt-bd_dom"/>
</dbReference>
<dbReference type="InterPro" id="IPR005294">
    <property type="entry name" value="ATP_synth_F1_asu"/>
</dbReference>
<dbReference type="InterPro" id="IPR020003">
    <property type="entry name" value="ATPase_a/bsu_AS"/>
</dbReference>
<dbReference type="InterPro" id="IPR004100">
    <property type="entry name" value="ATPase_F1/V1/A1_a/bsu_N"/>
</dbReference>
<dbReference type="InterPro" id="IPR036121">
    <property type="entry name" value="ATPase_F1/V1/A1_a/bsu_N_sf"/>
</dbReference>
<dbReference type="InterPro" id="IPR000194">
    <property type="entry name" value="ATPase_F1/V1/A1_a/bsu_nucl-bd"/>
</dbReference>
<dbReference type="InterPro" id="IPR027417">
    <property type="entry name" value="P-loop_NTPase"/>
</dbReference>
<dbReference type="NCBIfam" id="TIGR00962">
    <property type="entry name" value="atpA"/>
    <property type="match status" value="1"/>
</dbReference>
<dbReference type="NCBIfam" id="NF009884">
    <property type="entry name" value="PRK13343.1"/>
    <property type="match status" value="1"/>
</dbReference>
<dbReference type="PANTHER" id="PTHR48082">
    <property type="entry name" value="ATP SYNTHASE SUBUNIT ALPHA, MITOCHONDRIAL"/>
    <property type="match status" value="1"/>
</dbReference>
<dbReference type="PANTHER" id="PTHR48082:SF2">
    <property type="entry name" value="ATP SYNTHASE SUBUNIT ALPHA, MITOCHONDRIAL"/>
    <property type="match status" value="1"/>
</dbReference>
<dbReference type="Pfam" id="PF00006">
    <property type="entry name" value="ATP-synt_ab"/>
    <property type="match status" value="1"/>
</dbReference>
<dbReference type="Pfam" id="PF00306">
    <property type="entry name" value="ATP-synt_ab_C"/>
    <property type="match status" value="1"/>
</dbReference>
<dbReference type="Pfam" id="PF02874">
    <property type="entry name" value="ATP-synt_ab_N"/>
    <property type="match status" value="1"/>
</dbReference>
<dbReference type="PIRSF" id="PIRSF039088">
    <property type="entry name" value="F_ATPase_subunit_alpha"/>
    <property type="match status" value="1"/>
</dbReference>
<dbReference type="SUPFAM" id="SSF47917">
    <property type="entry name" value="C-terminal domain of alpha and beta subunits of F1 ATP synthase"/>
    <property type="match status" value="1"/>
</dbReference>
<dbReference type="SUPFAM" id="SSF50615">
    <property type="entry name" value="N-terminal domain of alpha and beta subunits of F1 ATP synthase"/>
    <property type="match status" value="1"/>
</dbReference>
<dbReference type="SUPFAM" id="SSF52540">
    <property type="entry name" value="P-loop containing nucleoside triphosphate hydrolases"/>
    <property type="match status" value="1"/>
</dbReference>
<dbReference type="PROSITE" id="PS00152">
    <property type="entry name" value="ATPASE_ALPHA_BETA"/>
    <property type="match status" value="1"/>
</dbReference>
<organism>
    <name type="scientific">Desulforudis audaxviator (strain MP104C)</name>
    <dbReference type="NCBI Taxonomy" id="477974"/>
    <lineage>
        <taxon>Bacteria</taxon>
        <taxon>Bacillati</taxon>
        <taxon>Bacillota</taxon>
        <taxon>Clostridia</taxon>
        <taxon>Thermoanaerobacterales</taxon>
        <taxon>Candidatus Desulforudaceae</taxon>
        <taxon>Candidatus Desulforudis</taxon>
    </lineage>
</organism>
<name>ATPA_DESAP</name>
<sequence length="507" mass="55486">MNLRPEEISSIIRQQIEKYEVQVEVTDVGTVIQIGDGVARVYGLEDCMYSELLEFPGGTLGMALNLEEDNIGCVILGSYLHIKEGDVVKRTGRIASVPVGEALIGRVVNPVGEPLDGKGPIKTDRFRPIEKIAHGVVFRSPVDTPLQTGIKAVDAMIPIGRGQRELIMGDRQTGKTAIAVDTIINQKGQDCICIYVAIGQKASTVANVIQKLHEEGAMDHTIVVVAGASDPSPLLYIAPFAGAAMGEEFMEAGKDVLVVYDDLSKQAAAYRELSLLLRRPPGREAYPGDVFNLHSRLLERAAKLHPNIGGGSMTALPVIETQQGDVSAYIPTNVISITDGQIILEPDLFYAGVRPAINVGLSVSRVGGKAQRTAMRQVAGQLRLDLAQYRELAAFAQFGSDLDRATRARLTRGERMVELLKQGQYNPMPLEEQVMSIYTGVRGYLDSLPADKVRDFEIEFLKYMRTEKPEIGEDIKVNQKITPENESKLKAAVEEFKQMFVTQHGLS</sequence>
<proteinExistence type="inferred from homology"/>
<accession>B1I6J9</accession>
<gene>
    <name evidence="1" type="primary">atpA</name>
    <name type="ordered locus">Daud_2139</name>
</gene>
<feature type="chain" id="PRO_1000143367" description="ATP synthase subunit alpha">
    <location>
        <begin position="1"/>
        <end position="507"/>
    </location>
</feature>
<feature type="binding site" evidence="1">
    <location>
        <begin position="169"/>
        <end position="176"/>
    </location>
    <ligand>
        <name>ATP</name>
        <dbReference type="ChEBI" id="CHEBI:30616"/>
    </ligand>
</feature>
<feature type="site" description="Required for activity" evidence="1">
    <location>
        <position position="362"/>
    </location>
</feature>
<comment type="function">
    <text evidence="1">Produces ATP from ADP in the presence of a proton gradient across the membrane. The alpha chain is a regulatory subunit.</text>
</comment>
<comment type="catalytic activity">
    <reaction evidence="1">
        <text>ATP + H2O + 4 H(+)(in) = ADP + phosphate + 5 H(+)(out)</text>
        <dbReference type="Rhea" id="RHEA:57720"/>
        <dbReference type="ChEBI" id="CHEBI:15377"/>
        <dbReference type="ChEBI" id="CHEBI:15378"/>
        <dbReference type="ChEBI" id="CHEBI:30616"/>
        <dbReference type="ChEBI" id="CHEBI:43474"/>
        <dbReference type="ChEBI" id="CHEBI:456216"/>
        <dbReference type="EC" id="7.1.2.2"/>
    </reaction>
</comment>
<comment type="subunit">
    <text evidence="1">F-type ATPases have 2 components, CF(1) - the catalytic core - and CF(0) - the membrane proton channel. CF(1) has five subunits: alpha(3), beta(3), gamma(1), delta(1), epsilon(1). CF(0) has three main subunits: a(1), b(2) and c(9-12). The alpha and beta chains form an alternating ring which encloses part of the gamma chain. CF(1) is attached to CF(0) by a central stalk formed by the gamma and epsilon chains, while a peripheral stalk is formed by the delta and b chains.</text>
</comment>
<comment type="subcellular location">
    <subcellularLocation>
        <location evidence="1">Cell membrane</location>
        <topology evidence="1">Peripheral membrane protein</topology>
    </subcellularLocation>
</comment>
<comment type="similarity">
    <text evidence="1">Belongs to the ATPase alpha/beta chains family.</text>
</comment>
<reference key="1">
    <citation type="submission" date="2007-10" db="EMBL/GenBank/DDBJ databases">
        <title>Complete sequence of chromosome of Desulforudis audaxviator MP104C.</title>
        <authorList>
            <person name="Copeland A."/>
            <person name="Lucas S."/>
            <person name="Lapidus A."/>
            <person name="Barry K."/>
            <person name="Glavina del Rio T."/>
            <person name="Dalin E."/>
            <person name="Tice H."/>
            <person name="Bruce D."/>
            <person name="Pitluck S."/>
            <person name="Lowry S.R."/>
            <person name="Larimer F."/>
            <person name="Land M.L."/>
            <person name="Hauser L."/>
            <person name="Kyrpides N."/>
            <person name="Ivanova N.N."/>
            <person name="Richardson P."/>
        </authorList>
    </citation>
    <scope>NUCLEOTIDE SEQUENCE [LARGE SCALE GENOMIC DNA]</scope>
    <source>
        <strain>MP104C</strain>
    </source>
</reference>
<keyword id="KW-0066">ATP synthesis</keyword>
<keyword id="KW-0067">ATP-binding</keyword>
<keyword id="KW-1003">Cell membrane</keyword>
<keyword id="KW-0139">CF(1)</keyword>
<keyword id="KW-0375">Hydrogen ion transport</keyword>
<keyword id="KW-0406">Ion transport</keyword>
<keyword id="KW-0472">Membrane</keyword>
<keyword id="KW-0547">Nucleotide-binding</keyword>
<keyword id="KW-1185">Reference proteome</keyword>
<keyword id="KW-1278">Translocase</keyword>
<keyword id="KW-0813">Transport</keyword>